<organism>
    <name type="scientific">Methanocaldococcus jannaschii (strain ATCC 43067 / DSM 2661 / JAL-1 / JCM 10045 / NBRC 100440)</name>
    <name type="common">Methanococcus jannaschii</name>
    <dbReference type="NCBI Taxonomy" id="243232"/>
    <lineage>
        <taxon>Archaea</taxon>
        <taxon>Methanobacteriati</taxon>
        <taxon>Methanobacteriota</taxon>
        <taxon>Methanomada group</taxon>
        <taxon>Methanococci</taxon>
        <taxon>Methanococcales</taxon>
        <taxon>Methanocaldococcaceae</taxon>
        <taxon>Methanocaldococcus</taxon>
    </lineage>
</organism>
<protein>
    <recommendedName>
        <fullName evidence="1">Small ribosomal subunit protein eS17</fullName>
    </recommendedName>
    <alternativeName>
        <fullName evidence="2">30S ribosomal protein S17e</fullName>
    </alternativeName>
</protein>
<evidence type="ECO:0000255" key="1">
    <source>
        <dbReference type="HAMAP-Rule" id="MF_00511"/>
    </source>
</evidence>
<evidence type="ECO:0000305" key="2"/>
<proteinExistence type="inferred from homology"/>
<gene>
    <name evidence="1" type="primary">rps17e</name>
    <name type="ordered locus">MJ0245</name>
</gene>
<name>RS17E_METJA</name>
<keyword id="KW-1185">Reference proteome</keyword>
<keyword id="KW-0687">Ribonucleoprotein</keyword>
<keyword id="KW-0689">Ribosomal protein</keyword>
<comment type="similarity">
    <text evidence="1">Belongs to the eukaryotic ribosomal protein eS17 family.</text>
</comment>
<comment type="sequence caution" evidence="2">
    <conflict type="erroneous initiation">
        <sequence resource="EMBL-CDS" id="AAB98233"/>
    </conflict>
</comment>
<dbReference type="EMBL" id="L77117">
    <property type="protein sequence ID" value="AAB98233.1"/>
    <property type="status" value="ALT_INIT"/>
    <property type="molecule type" value="Genomic_DNA"/>
</dbReference>
<dbReference type="PIR" id="F64330">
    <property type="entry name" value="F64330"/>
</dbReference>
<dbReference type="RefSeq" id="WP_064496434.1">
    <property type="nucleotide sequence ID" value="NC_000909.1"/>
</dbReference>
<dbReference type="SMR" id="P54026"/>
<dbReference type="FunCoup" id="P54026">
    <property type="interactions" value="61"/>
</dbReference>
<dbReference type="STRING" id="243232.MJ_0245"/>
<dbReference type="PaxDb" id="243232-MJ_0245"/>
<dbReference type="EnsemblBacteria" id="AAB98233">
    <property type="protein sequence ID" value="AAB98233"/>
    <property type="gene ID" value="MJ_0245"/>
</dbReference>
<dbReference type="GeneID" id="1451099"/>
<dbReference type="KEGG" id="mja:MJ_0245"/>
<dbReference type="eggNOG" id="arCOG01885">
    <property type="taxonomic scope" value="Archaea"/>
</dbReference>
<dbReference type="HOGENOM" id="CLU_176720_0_1_2"/>
<dbReference type="InParanoid" id="P54026"/>
<dbReference type="OrthoDB" id="52479at2157"/>
<dbReference type="PhylomeDB" id="P54026"/>
<dbReference type="Proteomes" id="UP000000805">
    <property type="component" value="Chromosome"/>
</dbReference>
<dbReference type="GO" id="GO:0005829">
    <property type="term" value="C:cytosol"/>
    <property type="evidence" value="ECO:0007669"/>
    <property type="project" value="UniProtKB-ARBA"/>
</dbReference>
<dbReference type="GO" id="GO:1990904">
    <property type="term" value="C:ribonucleoprotein complex"/>
    <property type="evidence" value="ECO:0007669"/>
    <property type="project" value="UniProtKB-KW"/>
</dbReference>
<dbReference type="GO" id="GO:0005840">
    <property type="term" value="C:ribosome"/>
    <property type="evidence" value="ECO:0007669"/>
    <property type="project" value="UniProtKB-KW"/>
</dbReference>
<dbReference type="GO" id="GO:0003735">
    <property type="term" value="F:structural constituent of ribosome"/>
    <property type="evidence" value="ECO:0007669"/>
    <property type="project" value="InterPro"/>
</dbReference>
<dbReference type="GO" id="GO:0006412">
    <property type="term" value="P:translation"/>
    <property type="evidence" value="ECO:0007669"/>
    <property type="project" value="UniProtKB-UniRule"/>
</dbReference>
<dbReference type="Gene3D" id="1.10.60.20">
    <property type="entry name" value="Ribosomal protein S17e-like"/>
    <property type="match status" value="1"/>
</dbReference>
<dbReference type="HAMAP" id="MF_00511">
    <property type="entry name" value="Ribosomal_eS17"/>
    <property type="match status" value="1"/>
</dbReference>
<dbReference type="InterPro" id="IPR001210">
    <property type="entry name" value="Ribosomal_eS17"/>
</dbReference>
<dbReference type="InterPro" id="IPR018273">
    <property type="entry name" value="Ribosomal_eS17_CS"/>
</dbReference>
<dbReference type="InterPro" id="IPR036401">
    <property type="entry name" value="Ribosomal_eS17_sf"/>
</dbReference>
<dbReference type="NCBIfam" id="NF002242">
    <property type="entry name" value="PRK01151.1"/>
    <property type="match status" value="1"/>
</dbReference>
<dbReference type="PANTHER" id="PTHR10732">
    <property type="entry name" value="40S RIBOSOMAL PROTEIN S17"/>
    <property type="match status" value="1"/>
</dbReference>
<dbReference type="PANTHER" id="PTHR10732:SF0">
    <property type="entry name" value="40S RIBOSOMAL PROTEIN S17"/>
    <property type="match status" value="1"/>
</dbReference>
<dbReference type="Pfam" id="PF00833">
    <property type="entry name" value="Ribosomal_S17e"/>
    <property type="match status" value="1"/>
</dbReference>
<dbReference type="SUPFAM" id="SSF116820">
    <property type="entry name" value="Rps17e-like"/>
    <property type="match status" value="1"/>
</dbReference>
<dbReference type="PROSITE" id="PS00712">
    <property type="entry name" value="RIBOSOMAL_S17E"/>
    <property type="match status" value="1"/>
</dbReference>
<feature type="chain" id="PRO_0000141553" description="Small ribosomal subunit protein eS17">
    <location>
        <begin position="1"/>
        <end position="62"/>
    </location>
</feature>
<reference key="1">
    <citation type="journal article" date="1996" name="Science">
        <title>Complete genome sequence of the methanogenic archaeon, Methanococcus jannaschii.</title>
        <authorList>
            <person name="Bult C.J."/>
            <person name="White O."/>
            <person name="Olsen G.J."/>
            <person name="Zhou L."/>
            <person name="Fleischmann R.D."/>
            <person name="Sutton G.G."/>
            <person name="Blake J.A."/>
            <person name="FitzGerald L.M."/>
            <person name="Clayton R.A."/>
            <person name="Gocayne J.D."/>
            <person name="Kerlavage A.R."/>
            <person name="Dougherty B.A."/>
            <person name="Tomb J.-F."/>
            <person name="Adams M.D."/>
            <person name="Reich C.I."/>
            <person name="Overbeek R."/>
            <person name="Kirkness E.F."/>
            <person name="Weinstock K.G."/>
            <person name="Merrick J.M."/>
            <person name="Glodek A."/>
            <person name="Scott J.L."/>
            <person name="Geoghagen N.S.M."/>
            <person name="Weidman J.F."/>
            <person name="Fuhrmann J.L."/>
            <person name="Nguyen D."/>
            <person name="Utterback T.R."/>
            <person name="Kelley J.M."/>
            <person name="Peterson J.D."/>
            <person name="Sadow P.W."/>
            <person name="Hanna M.C."/>
            <person name="Cotton M.D."/>
            <person name="Roberts K.M."/>
            <person name="Hurst M.A."/>
            <person name="Kaine B.P."/>
            <person name="Borodovsky M."/>
            <person name="Klenk H.-P."/>
            <person name="Fraser C.M."/>
            <person name="Smith H.O."/>
            <person name="Woese C.R."/>
            <person name="Venter J.C."/>
        </authorList>
    </citation>
    <scope>NUCLEOTIDE SEQUENCE [LARGE SCALE GENOMIC DNA]</scope>
    <source>
        <strain>ATCC 43067 / DSM 2661 / JAL-1 / JCM 10045 / NBRC 100440</strain>
    </source>
</reference>
<sequence length="62" mass="7510">MGRIRQTLIKRTAMELIKKYRDLFTTDFETNKRVLEEVAQISTKRLRNRIAGYITHKMRQLQ</sequence>
<accession>P54026</accession>